<dbReference type="EC" id="3.1.26.4" evidence="1"/>
<dbReference type="EMBL" id="CP000606">
    <property type="protein sequence ID" value="ABO24487.1"/>
    <property type="molecule type" value="Genomic_DNA"/>
</dbReference>
<dbReference type="RefSeq" id="WP_011866418.1">
    <property type="nucleotide sequence ID" value="NC_009092.1"/>
</dbReference>
<dbReference type="SMR" id="A3QG89"/>
<dbReference type="STRING" id="323850.Shew_2621"/>
<dbReference type="KEGG" id="slo:Shew_2621"/>
<dbReference type="eggNOG" id="COG0164">
    <property type="taxonomic scope" value="Bacteria"/>
</dbReference>
<dbReference type="HOGENOM" id="CLU_036532_3_2_6"/>
<dbReference type="OrthoDB" id="9803420at2"/>
<dbReference type="Proteomes" id="UP000001558">
    <property type="component" value="Chromosome"/>
</dbReference>
<dbReference type="GO" id="GO:0005737">
    <property type="term" value="C:cytoplasm"/>
    <property type="evidence" value="ECO:0007669"/>
    <property type="project" value="UniProtKB-SubCell"/>
</dbReference>
<dbReference type="GO" id="GO:0032299">
    <property type="term" value="C:ribonuclease H2 complex"/>
    <property type="evidence" value="ECO:0007669"/>
    <property type="project" value="TreeGrafter"/>
</dbReference>
<dbReference type="GO" id="GO:0030145">
    <property type="term" value="F:manganese ion binding"/>
    <property type="evidence" value="ECO:0007669"/>
    <property type="project" value="UniProtKB-UniRule"/>
</dbReference>
<dbReference type="GO" id="GO:0003723">
    <property type="term" value="F:RNA binding"/>
    <property type="evidence" value="ECO:0007669"/>
    <property type="project" value="InterPro"/>
</dbReference>
<dbReference type="GO" id="GO:0004523">
    <property type="term" value="F:RNA-DNA hybrid ribonuclease activity"/>
    <property type="evidence" value="ECO:0007669"/>
    <property type="project" value="UniProtKB-UniRule"/>
</dbReference>
<dbReference type="GO" id="GO:0043137">
    <property type="term" value="P:DNA replication, removal of RNA primer"/>
    <property type="evidence" value="ECO:0007669"/>
    <property type="project" value="TreeGrafter"/>
</dbReference>
<dbReference type="GO" id="GO:0006298">
    <property type="term" value="P:mismatch repair"/>
    <property type="evidence" value="ECO:0007669"/>
    <property type="project" value="TreeGrafter"/>
</dbReference>
<dbReference type="CDD" id="cd07182">
    <property type="entry name" value="RNase_HII_bacteria_HII_like"/>
    <property type="match status" value="1"/>
</dbReference>
<dbReference type="FunFam" id="3.30.420.10:FF:000006">
    <property type="entry name" value="Ribonuclease HII"/>
    <property type="match status" value="1"/>
</dbReference>
<dbReference type="Gene3D" id="3.30.420.10">
    <property type="entry name" value="Ribonuclease H-like superfamily/Ribonuclease H"/>
    <property type="match status" value="1"/>
</dbReference>
<dbReference type="HAMAP" id="MF_00052_B">
    <property type="entry name" value="RNase_HII_B"/>
    <property type="match status" value="1"/>
</dbReference>
<dbReference type="InterPro" id="IPR022898">
    <property type="entry name" value="RNase_HII"/>
</dbReference>
<dbReference type="InterPro" id="IPR001352">
    <property type="entry name" value="RNase_HII/HIII"/>
</dbReference>
<dbReference type="InterPro" id="IPR024567">
    <property type="entry name" value="RNase_HII/HIII_dom"/>
</dbReference>
<dbReference type="InterPro" id="IPR012337">
    <property type="entry name" value="RNaseH-like_sf"/>
</dbReference>
<dbReference type="InterPro" id="IPR036397">
    <property type="entry name" value="RNaseH_sf"/>
</dbReference>
<dbReference type="NCBIfam" id="NF000595">
    <property type="entry name" value="PRK00015.1-3"/>
    <property type="match status" value="1"/>
</dbReference>
<dbReference type="NCBIfam" id="NF000596">
    <property type="entry name" value="PRK00015.1-4"/>
    <property type="match status" value="1"/>
</dbReference>
<dbReference type="PANTHER" id="PTHR10954">
    <property type="entry name" value="RIBONUCLEASE H2 SUBUNIT A"/>
    <property type="match status" value="1"/>
</dbReference>
<dbReference type="PANTHER" id="PTHR10954:SF18">
    <property type="entry name" value="RIBONUCLEASE HII"/>
    <property type="match status" value="1"/>
</dbReference>
<dbReference type="Pfam" id="PF01351">
    <property type="entry name" value="RNase_HII"/>
    <property type="match status" value="1"/>
</dbReference>
<dbReference type="SUPFAM" id="SSF53098">
    <property type="entry name" value="Ribonuclease H-like"/>
    <property type="match status" value="1"/>
</dbReference>
<dbReference type="PROSITE" id="PS51975">
    <property type="entry name" value="RNASE_H_2"/>
    <property type="match status" value="1"/>
</dbReference>
<comment type="function">
    <text evidence="1">Endonuclease that specifically degrades the RNA of RNA-DNA hybrids.</text>
</comment>
<comment type="catalytic activity">
    <reaction evidence="1">
        <text>Endonucleolytic cleavage to 5'-phosphomonoester.</text>
        <dbReference type="EC" id="3.1.26.4"/>
    </reaction>
</comment>
<comment type="cofactor">
    <cofactor evidence="1">
        <name>Mn(2+)</name>
        <dbReference type="ChEBI" id="CHEBI:29035"/>
    </cofactor>
    <cofactor evidence="1">
        <name>Mg(2+)</name>
        <dbReference type="ChEBI" id="CHEBI:18420"/>
    </cofactor>
    <text evidence="1">Manganese or magnesium. Binds 1 divalent metal ion per monomer in the absence of substrate. May bind a second metal ion after substrate binding.</text>
</comment>
<comment type="subcellular location">
    <subcellularLocation>
        <location evidence="1">Cytoplasm</location>
    </subcellularLocation>
</comment>
<comment type="similarity">
    <text evidence="1">Belongs to the RNase HII family.</text>
</comment>
<name>RNH2_SHELP</name>
<evidence type="ECO:0000255" key="1">
    <source>
        <dbReference type="HAMAP-Rule" id="MF_00052"/>
    </source>
</evidence>
<evidence type="ECO:0000255" key="2">
    <source>
        <dbReference type="PROSITE-ProRule" id="PRU01319"/>
    </source>
</evidence>
<accession>A3QG89</accession>
<organism>
    <name type="scientific">Shewanella loihica (strain ATCC BAA-1088 / PV-4)</name>
    <dbReference type="NCBI Taxonomy" id="323850"/>
    <lineage>
        <taxon>Bacteria</taxon>
        <taxon>Pseudomonadati</taxon>
        <taxon>Pseudomonadota</taxon>
        <taxon>Gammaproteobacteria</taxon>
        <taxon>Alteromonadales</taxon>
        <taxon>Shewanellaceae</taxon>
        <taxon>Shewanella</taxon>
    </lineage>
</organism>
<protein>
    <recommendedName>
        <fullName evidence="1">Ribonuclease HII</fullName>
        <shortName evidence="1">RNase HII</shortName>
        <ecNumber evidence="1">3.1.26.4</ecNumber>
    </recommendedName>
</protein>
<feature type="chain" id="PRO_1000031200" description="Ribonuclease HII">
    <location>
        <begin position="1"/>
        <end position="208"/>
    </location>
</feature>
<feature type="domain" description="RNase H type-2" evidence="2">
    <location>
        <begin position="18"/>
        <end position="208"/>
    </location>
</feature>
<feature type="binding site" evidence="1">
    <location>
        <position position="24"/>
    </location>
    <ligand>
        <name>a divalent metal cation</name>
        <dbReference type="ChEBI" id="CHEBI:60240"/>
    </ligand>
</feature>
<feature type="binding site" evidence="1">
    <location>
        <position position="25"/>
    </location>
    <ligand>
        <name>a divalent metal cation</name>
        <dbReference type="ChEBI" id="CHEBI:60240"/>
    </ligand>
</feature>
<feature type="binding site" evidence="1">
    <location>
        <position position="116"/>
    </location>
    <ligand>
        <name>a divalent metal cation</name>
        <dbReference type="ChEBI" id="CHEBI:60240"/>
    </ligand>
</feature>
<proteinExistence type="inferred from homology"/>
<sequence>MAIYKQITAEQVEALCSGFYAGVDEVGRGPLVGDVVTAAVVLDPNNPIEGLNDSKKLSEKKRDALYEEILAKALDVSVGRCSPLEIDELNILHATMLAMQRAVAGLRARPDRVLIDGNRVPDFTDETLEGHAVIKGDGLIPAISAASIVAKVVRDREMEALDERYPEYGFAKHKGYPTKAHFEALEAHGVLAEHRKSFRPVKERLEAC</sequence>
<gene>
    <name evidence="1" type="primary">rnhB</name>
    <name type="ordered locus">Shew_2621</name>
</gene>
<reference key="1">
    <citation type="submission" date="2007-03" db="EMBL/GenBank/DDBJ databases">
        <title>Complete sequence of Shewanella loihica PV-4.</title>
        <authorList>
            <consortium name="US DOE Joint Genome Institute"/>
            <person name="Copeland A."/>
            <person name="Lucas S."/>
            <person name="Lapidus A."/>
            <person name="Barry K."/>
            <person name="Detter J.C."/>
            <person name="Glavina del Rio T."/>
            <person name="Hammon N."/>
            <person name="Israni S."/>
            <person name="Dalin E."/>
            <person name="Tice H."/>
            <person name="Pitluck S."/>
            <person name="Chain P."/>
            <person name="Malfatti S."/>
            <person name="Shin M."/>
            <person name="Vergez L."/>
            <person name="Schmutz J."/>
            <person name="Larimer F."/>
            <person name="Land M."/>
            <person name="Hauser L."/>
            <person name="Kyrpides N."/>
            <person name="Mikhailova N."/>
            <person name="Romine M.F."/>
            <person name="Serres G."/>
            <person name="Fredrickson J."/>
            <person name="Tiedje J."/>
            <person name="Richardson P."/>
        </authorList>
    </citation>
    <scope>NUCLEOTIDE SEQUENCE [LARGE SCALE GENOMIC DNA]</scope>
    <source>
        <strain>ATCC BAA-1088 / PV-4</strain>
    </source>
</reference>
<keyword id="KW-0963">Cytoplasm</keyword>
<keyword id="KW-0255">Endonuclease</keyword>
<keyword id="KW-0378">Hydrolase</keyword>
<keyword id="KW-0464">Manganese</keyword>
<keyword id="KW-0479">Metal-binding</keyword>
<keyword id="KW-0540">Nuclease</keyword>
<keyword id="KW-1185">Reference proteome</keyword>